<gene>
    <name evidence="1" type="primary">rplS</name>
    <name type="ordered locus">EUBELI_01049</name>
</gene>
<proteinExistence type="inferred from homology"/>
<name>RL19_LACE2</name>
<protein>
    <recommendedName>
        <fullName evidence="1">Large ribosomal subunit protein bL19</fullName>
    </recommendedName>
    <alternativeName>
        <fullName evidence="2">50S ribosomal protein L19</fullName>
    </alternativeName>
</protein>
<keyword id="KW-1185">Reference proteome</keyword>
<keyword id="KW-0687">Ribonucleoprotein</keyword>
<keyword id="KW-0689">Ribosomal protein</keyword>
<sequence length="115" mass="12978">MNTIIKNIEDAQLKAQAPEFRVGDTVRVSAKIKEGNRERIQVFEGTVLKKQGTGVRATFTVRKISNGVGVEKTWPLHSPIVEKVEVVRRGKARRAKLNYLRQRTGKAAKVKELVR</sequence>
<accession>C4Z0D7</accession>
<evidence type="ECO:0000255" key="1">
    <source>
        <dbReference type="HAMAP-Rule" id="MF_00402"/>
    </source>
</evidence>
<evidence type="ECO:0000305" key="2"/>
<feature type="chain" id="PRO_1000205889" description="Large ribosomal subunit protein bL19">
    <location>
        <begin position="1"/>
        <end position="115"/>
    </location>
</feature>
<organism>
    <name type="scientific">Lachnospira eligens (strain ATCC 27750 / DSM 3376 / VPI C15-48 / C15-B4)</name>
    <name type="common">Eubacterium eligens</name>
    <dbReference type="NCBI Taxonomy" id="515620"/>
    <lineage>
        <taxon>Bacteria</taxon>
        <taxon>Bacillati</taxon>
        <taxon>Bacillota</taxon>
        <taxon>Clostridia</taxon>
        <taxon>Lachnospirales</taxon>
        <taxon>Lachnospiraceae</taxon>
        <taxon>Lachnospira</taxon>
    </lineage>
</organism>
<reference key="1">
    <citation type="journal article" date="2009" name="Proc. Natl. Acad. Sci. U.S.A.">
        <title>Characterizing a model human gut microbiota composed of members of its two dominant bacterial phyla.</title>
        <authorList>
            <person name="Mahowald M.A."/>
            <person name="Rey F.E."/>
            <person name="Seedorf H."/>
            <person name="Turnbaugh P.J."/>
            <person name="Fulton R.S."/>
            <person name="Wollam A."/>
            <person name="Shah N."/>
            <person name="Wang C."/>
            <person name="Magrini V."/>
            <person name="Wilson R.K."/>
            <person name="Cantarel B.L."/>
            <person name="Coutinho P.M."/>
            <person name="Henrissat B."/>
            <person name="Crock L.W."/>
            <person name="Russell A."/>
            <person name="Verberkmoes N.C."/>
            <person name="Hettich R.L."/>
            <person name="Gordon J.I."/>
        </authorList>
    </citation>
    <scope>NUCLEOTIDE SEQUENCE [LARGE SCALE GENOMIC DNA]</scope>
    <source>
        <strain>ATCC 27750 / DSM 3376 / VPI C15-48 / C15-B4</strain>
    </source>
</reference>
<comment type="function">
    <text evidence="1">This protein is located at the 30S-50S ribosomal subunit interface and may play a role in the structure and function of the aminoacyl-tRNA binding site.</text>
</comment>
<comment type="similarity">
    <text evidence="1">Belongs to the bacterial ribosomal protein bL19 family.</text>
</comment>
<dbReference type="EMBL" id="CP001104">
    <property type="protein sequence ID" value="ACR72050.1"/>
    <property type="molecule type" value="Genomic_DNA"/>
</dbReference>
<dbReference type="RefSeq" id="WP_012739285.1">
    <property type="nucleotide sequence ID" value="NC_012778.1"/>
</dbReference>
<dbReference type="SMR" id="C4Z0D7"/>
<dbReference type="STRING" id="515620.EUBELI_01049"/>
<dbReference type="GeneID" id="41355775"/>
<dbReference type="KEGG" id="eel:EUBELI_01049"/>
<dbReference type="eggNOG" id="COG0335">
    <property type="taxonomic scope" value="Bacteria"/>
</dbReference>
<dbReference type="HOGENOM" id="CLU_103507_2_2_9"/>
<dbReference type="Proteomes" id="UP000001476">
    <property type="component" value="Chromosome"/>
</dbReference>
<dbReference type="GO" id="GO:0022625">
    <property type="term" value="C:cytosolic large ribosomal subunit"/>
    <property type="evidence" value="ECO:0007669"/>
    <property type="project" value="TreeGrafter"/>
</dbReference>
<dbReference type="GO" id="GO:0003735">
    <property type="term" value="F:structural constituent of ribosome"/>
    <property type="evidence" value="ECO:0007669"/>
    <property type="project" value="InterPro"/>
</dbReference>
<dbReference type="GO" id="GO:0006412">
    <property type="term" value="P:translation"/>
    <property type="evidence" value="ECO:0007669"/>
    <property type="project" value="UniProtKB-UniRule"/>
</dbReference>
<dbReference type="FunFam" id="2.30.30.790:FF:000001">
    <property type="entry name" value="50S ribosomal protein L19"/>
    <property type="match status" value="1"/>
</dbReference>
<dbReference type="Gene3D" id="2.30.30.790">
    <property type="match status" value="1"/>
</dbReference>
<dbReference type="HAMAP" id="MF_00402">
    <property type="entry name" value="Ribosomal_bL19"/>
    <property type="match status" value="1"/>
</dbReference>
<dbReference type="InterPro" id="IPR001857">
    <property type="entry name" value="Ribosomal_bL19"/>
</dbReference>
<dbReference type="InterPro" id="IPR038657">
    <property type="entry name" value="Ribosomal_bL19_sf"/>
</dbReference>
<dbReference type="InterPro" id="IPR008991">
    <property type="entry name" value="Translation_prot_SH3-like_sf"/>
</dbReference>
<dbReference type="NCBIfam" id="TIGR01024">
    <property type="entry name" value="rplS_bact"/>
    <property type="match status" value="1"/>
</dbReference>
<dbReference type="PANTHER" id="PTHR15680:SF9">
    <property type="entry name" value="LARGE RIBOSOMAL SUBUNIT PROTEIN BL19M"/>
    <property type="match status" value="1"/>
</dbReference>
<dbReference type="PANTHER" id="PTHR15680">
    <property type="entry name" value="RIBOSOMAL PROTEIN L19"/>
    <property type="match status" value="1"/>
</dbReference>
<dbReference type="Pfam" id="PF01245">
    <property type="entry name" value="Ribosomal_L19"/>
    <property type="match status" value="1"/>
</dbReference>
<dbReference type="PIRSF" id="PIRSF002191">
    <property type="entry name" value="Ribosomal_L19"/>
    <property type="match status" value="1"/>
</dbReference>
<dbReference type="PRINTS" id="PR00061">
    <property type="entry name" value="RIBOSOMALL19"/>
</dbReference>
<dbReference type="SUPFAM" id="SSF50104">
    <property type="entry name" value="Translation proteins SH3-like domain"/>
    <property type="match status" value="1"/>
</dbReference>